<keyword id="KW-0067">ATP-binding</keyword>
<keyword id="KW-0378">Hydrolase</keyword>
<keyword id="KW-0460">Magnesium</keyword>
<keyword id="KW-0479">Metal-binding</keyword>
<keyword id="KW-0511">Multifunctional enzyme</keyword>
<keyword id="KW-0533">Nickel</keyword>
<keyword id="KW-0547">Nucleotide-binding</keyword>
<keyword id="KW-0548">Nucleotidyltransferase</keyword>
<keyword id="KW-0692">RNA repair</keyword>
<keyword id="KW-0694">RNA-binding</keyword>
<keyword id="KW-0808">Transferase</keyword>
<keyword id="KW-0819">tRNA processing</keyword>
<gene>
    <name evidence="1" type="primary">cca</name>
    <name type="ordered locus">Sbal195_1232</name>
</gene>
<reference key="1">
    <citation type="submission" date="2007-11" db="EMBL/GenBank/DDBJ databases">
        <title>Complete sequence of chromosome of Shewanella baltica OS195.</title>
        <authorList>
            <consortium name="US DOE Joint Genome Institute"/>
            <person name="Copeland A."/>
            <person name="Lucas S."/>
            <person name="Lapidus A."/>
            <person name="Barry K."/>
            <person name="Glavina del Rio T."/>
            <person name="Dalin E."/>
            <person name="Tice H."/>
            <person name="Pitluck S."/>
            <person name="Chain P."/>
            <person name="Malfatti S."/>
            <person name="Shin M."/>
            <person name="Vergez L."/>
            <person name="Schmutz J."/>
            <person name="Larimer F."/>
            <person name="Land M."/>
            <person name="Hauser L."/>
            <person name="Kyrpides N."/>
            <person name="Kim E."/>
            <person name="Brettar I."/>
            <person name="Rodrigues J."/>
            <person name="Konstantinidis K."/>
            <person name="Klappenbach J."/>
            <person name="Hofle M."/>
            <person name="Tiedje J."/>
            <person name="Richardson P."/>
        </authorList>
    </citation>
    <scope>NUCLEOTIDE SEQUENCE [LARGE SCALE GENOMIC DNA]</scope>
    <source>
        <strain>OS195</strain>
    </source>
</reference>
<comment type="function">
    <text evidence="1">Catalyzes the addition and repair of the essential 3'-terminal CCA sequence in tRNAs without using a nucleic acid template. Adds these three nucleotides in the order of C, C, and A to the tRNA nucleotide-73, using CTP and ATP as substrates and producing inorganic pyrophosphate. tRNA 3'-terminal CCA addition is required both for tRNA processing and repair. Also involved in tRNA surveillance by mediating tandem CCA addition to generate a CCACCA at the 3' terminus of unstable tRNAs. While stable tRNAs receive only 3'-terminal CCA, unstable tRNAs are marked with CCACCA and rapidly degraded.</text>
</comment>
<comment type="catalytic activity">
    <reaction evidence="1">
        <text>a tRNA precursor + 2 CTP + ATP = a tRNA with a 3' CCA end + 3 diphosphate</text>
        <dbReference type="Rhea" id="RHEA:14433"/>
        <dbReference type="Rhea" id="RHEA-COMP:10465"/>
        <dbReference type="Rhea" id="RHEA-COMP:10468"/>
        <dbReference type="ChEBI" id="CHEBI:30616"/>
        <dbReference type="ChEBI" id="CHEBI:33019"/>
        <dbReference type="ChEBI" id="CHEBI:37563"/>
        <dbReference type="ChEBI" id="CHEBI:74896"/>
        <dbReference type="ChEBI" id="CHEBI:83071"/>
        <dbReference type="EC" id="2.7.7.72"/>
    </reaction>
</comment>
<comment type="catalytic activity">
    <reaction evidence="1">
        <text>a tRNA with a 3' CCA end + 2 CTP + ATP = a tRNA with a 3' CCACCA end + 3 diphosphate</text>
        <dbReference type="Rhea" id="RHEA:76235"/>
        <dbReference type="Rhea" id="RHEA-COMP:10468"/>
        <dbReference type="Rhea" id="RHEA-COMP:18655"/>
        <dbReference type="ChEBI" id="CHEBI:30616"/>
        <dbReference type="ChEBI" id="CHEBI:33019"/>
        <dbReference type="ChEBI" id="CHEBI:37563"/>
        <dbReference type="ChEBI" id="CHEBI:83071"/>
        <dbReference type="ChEBI" id="CHEBI:195187"/>
    </reaction>
    <physiologicalReaction direction="left-to-right" evidence="1">
        <dbReference type="Rhea" id="RHEA:76236"/>
    </physiologicalReaction>
</comment>
<comment type="cofactor">
    <cofactor evidence="1">
        <name>Mg(2+)</name>
        <dbReference type="ChEBI" id="CHEBI:18420"/>
    </cofactor>
    <text evidence="1">Magnesium is required for nucleotidyltransferase activity.</text>
</comment>
<comment type="cofactor">
    <cofactor evidence="1">
        <name>Ni(2+)</name>
        <dbReference type="ChEBI" id="CHEBI:49786"/>
    </cofactor>
    <text evidence="1">Nickel for phosphatase activity.</text>
</comment>
<comment type="subunit">
    <text evidence="1">Monomer. Can also form homodimers and oligomers.</text>
</comment>
<comment type="domain">
    <text evidence="1">Comprises two domains: an N-terminal domain containing the nucleotidyltransferase activity and a C-terminal HD domain associated with both phosphodiesterase and phosphatase activities.</text>
</comment>
<comment type="miscellaneous">
    <text evidence="1">A single active site specifically recognizes both ATP and CTP and is responsible for their addition.</text>
</comment>
<comment type="similarity">
    <text evidence="1">Belongs to the tRNA nucleotidyltransferase/poly(A) polymerase family. Bacterial CCA-adding enzyme type 1 subfamily.</text>
</comment>
<accession>A9L5J0</accession>
<dbReference type="EC" id="2.7.7.72" evidence="1"/>
<dbReference type="EC" id="3.1.3.-" evidence="1"/>
<dbReference type="EC" id="3.1.4.-" evidence="1"/>
<dbReference type="EMBL" id="CP000891">
    <property type="protein sequence ID" value="ABX48407.1"/>
    <property type="molecule type" value="Genomic_DNA"/>
</dbReference>
<dbReference type="RefSeq" id="WP_006085040.1">
    <property type="nucleotide sequence ID" value="NC_009997.1"/>
</dbReference>
<dbReference type="SMR" id="A9L5J0"/>
<dbReference type="KEGG" id="sbn:Sbal195_1232"/>
<dbReference type="HOGENOM" id="CLU_015961_1_1_6"/>
<dbReference type="Proteomes" id="UP000000770">
    <property type="component" value="Chromosome"/>
</dbReference>
<dbReference type="GO" id="GO:0005524">
    <property type="term" value="F:ATP binding"/>
    <property type="evidence" value="ECO:0007669"/>
    <property type="project" value="UniProtKB-UniRule"/>
</dbReference>
<dbReference type="GO" id="GO:0004810">
    <property type="term" value="F:CCA tRNA nucleotidyltransferase activity"/>
    <property type="evidence" value="ECO:0007669"/>
    <property type="project" value="UniProtKB-UniRule"/>
</dbReference>
<dbReference type="GO" id="GO:0004112">
    <property type="term" value="F:cyclic-nucleotide phosphodiesterase activity"/>
    <property type="evidence" value="ECO:0007669"/>
    <property type="project" value="UniProtKB-UniRule"/>
</dbReference>
<dbReference type="GO" id="GO:0000287">
    <property type="term" value="F:magnesium ion binding"/>
    <property type="evidence" value="ECO:0007669"/>
    <property type="project" value="UniProtKB-UniRule"/>
</dbReference>
<dbReference type="GO" id="GO:0016791">
    <property type="term" value="F:phosphatase activity"/>
    <property type="evidence" value="ECO:0007669"/>
    <property type="project" value="UniProtKB-UniRule"/>
</dbReference>
<dbReference type="GO" id="GO:0000049">
    <property type="term" value="F:tRNA binding"/>
    <property type="evidence" value="ECO:0007669"/>
    <property type="project" value="UniProtKB-UniRule"/>
</dbReference>
<dbReference type="GO" id="GO:0042245">
    <property type="term" value="P:RNA repair"/>
    <property type="evidence" value="ECO:0007669"/>
    <property type="project" value="UniProtKB-KW"/>
</dbReference>
<dbReference type="GO" id="GO:0001680">
    <property type="term" value="P:tRNA 3'-terminal CCA addition"/>
    <property type="evidence" value="ECO:0007669"/>
    <property type="project" value="UniProtKB-UniRule"/>
</dbReference>
<dbReference type="CDD" id="cd00077">
    <property type="entry name" value="HDc"/>
    <property type="match status" value="1"/>
</dbReference>
<dbReference type="CDD" id="cd05398">
    <property type="entry name" value="NT_ClassII-CCAase"/>
    <property type="match status" value="1"/>
</dbReference>
<dbReference type="FunFam" id="1.10.3090.10:FF:000001">
    <property type="entry name" value="Multifunctional CCA protein"/>
    <property type="match status" value="1"/>
</dbReference>
<dbReference type="Gene3D" id="3.30.460.10">
    <property type="entry name" value="Beta Polymerase, domain 2"/>
    <property type="match status" value="1"/>
</dbReference>
<dbReference type="Gene3D" id="1.10.3090.10">
    <property type="entry name" value="cca-adding enzyme, domain 2"/>
    <property type="match status" value="1"/>
</dbReference>
<dbReference type="HAMAP" id="MF_01261">
    <property type="entry name" value="CCA_bact_type1"/>
    <property type="match status" value="1"/>
</dbReference>
<dbReference type="HAMAP" id="MF_01262">
    <property type="entry name" value="CCA_bact_type2"/>
    <property type="match status" value="1"/>
</dbReference>
<dbReference type="InterPro" id="IPR012006">
    <property type="entry name" value="CCA_bact"/>
</dbReference>
<dbReference type="InterPro" id="IPR003607">
    <property type="entry name" value="HD/PDEase_dom"/>
</dbReference>
<dbReference type="InterPro" id="IPR006674">
    <property type="entry name" value="HD_domain"/>
</dbReference>
<dbReference type="InterPro" id="IPR043519">
    <property type="entry name" value="NT_sf"/>
</dbReference>
<dbReference type="InterPro" id="IPR002646">
    <property type="entry name" value="PolA_pol_head_dom"/>
</dbReference>
<dbReference type="InterPro" id="IPR032828">
    <property type="entry name" value="PolyA_RNA-bd"/>
</dbReference>
<dbReference type="InterPro" id="IPR050124">
    <property type="entry name" value="tRNA_CCA-adding_enzyme"/>
</dbReference>
<dbReference type="NCBIfam" id="NF008137">
    <property type="entry name" value="PRK10885.1"/>
    <property type="match status" value="1"/>
</dbReference>
<dbReference type="PANTHER" id="PTHR47545">
    <property type="entry name" value="MULTIFUNCTIONAL CCA PROTEIN"/>
    <property type="match status" value="1"/>
</dbReference>
<dbReference type="PANTHER" id="PTHR47545:SF1">
    <property type="entry name" value="MULTIFUNCTIONAL CCA PROTEIN"/>
    <property type="match status" value="1"/>
</dbReference>
<dbReference type="Pfam" id="PF01966">
    <property type="entry name" value="HD"/>
    <property type="match status" value="1"/>
</dbReference>
<dbReference type="Pfam" id="PF01743">
    <property type="entry name" value="PolyA_pol"/>
    <property type="match status" value="1"/>
</dbReference>
<dbReference type="Pfam" id="PF12627">
    <property type="entry name" value="PolyA_pol_RNAbd"/>
    <property type="match status" value="1"/>
</dbReference>
<dbReference type="PIRSF" id="PIRSF000813">
    <property type="entry name" value="CCA_bact"/>
    <property type="match status" value="1"/>
</dbReference>
<dbReference type="SUPFAM" id="SSF81301">
    <property type="entry name" value="Nucleotidyltransferase"/>
    <property type="match status" value="1"/>
</dbReference>
<dbReference type="SUPFAM" id="SSF81891">
    <property type="entry name" value="Poly A polymerase C-terminal region-like"/>
    <property type="match status" value="1"/>
</dbReference>
<dbReference type="PROSITE" id="PS51831">
    <property type="entry name" value="HD"/>
    <property type="match status" value="1"/>
</dbReference>
<organism>
    <name type="scientific">Shewanella baltica (strain OS195)</name>
    <dbReference type="NCBI Taxonomy" id="399599"/>
    <lineage>
        <taxon>Bacteria</taxon>
        <taxon>Pseudomonadati</taxon>
        <taxon>Pseudomonadota</taxon>
        <taxon>Gammaproteobacteria</taxon>
        <taxon>Alteromonadales</taxon>
        <taxon>Shewanellaceae</taxon>
        <taxon>Shewanella</taxon>
    </lineage>
</organism>
<protein>
    <recommendedName>
        <fullName evidence="1">Multifunctional CCA protein</fullName>
    </recommendedName>
    <domain>
        <recommendedName>
            <fullName evidence="1">CCA-adding enzyme</fullName>
            <ecNumber evidence="1">2.7.7.72</ecNumber>
        </recommendedName>
        <alternativeName>
            <fullName evidence="1">CCA tRNA nucleotidyltransferase</fullName>
        </alternativeName>
        <alternativeName>
            <fullName evidence="1">tRNA CCA-pyrophosphorylase</fullName>
        </alternativeName>
        <alternativeName>
            <fullName evidence="1">tRNA adenylyl-/cytidylyl-transferase</fullName>
        </alternativeName>
        <alternativeName>
            <fullName evidence="1">tRNA nucleotidyltransferase</fullName>
        </alternativeName>
        <alternativeName>
            <fullName evidence="1">tRNA-NT</fullName>
        </alternativeName>
    </domain>
    <domain>
        <recommendedName>
            <fullName evidence="1">2'-nucleotidase</fullName>
            <ecNumber evidence="1">3.1.3.-</ecNumber>
        </recommendedName>
    </domain>
    <domain>
        <recommendedName>
            <fullName evidence="1">2',3'-cyclic phosphodiesterase</fullName>
            <ecNumber evidence="1">3.1.4.-</ecNumber>
        </recommendedName>
    </domain>
    <domain>
        <recommendedName>
            <fullName evidence="1">Phosphatase</fullName>
            <ecNumber evidence="1">3.1.3.-</ecNumber>
        </recommendedName>
    </domain>
</protein>
<name>CCA_SHEB9</name>
<sequence>MKIYLVGGAVRDSLLNLPIKDKDYLVVGATPEQMLQLGYRQVGKDFPVFLHPKNQQEYALARTERKIALGYGGFSCHASPDVTLEQDLLRRDLTINAIAQDEKGNLYDPFNGIEDINARLLRHVSDAFVEDPLRVLRVARFAARFHALGFHIAAETLALMRQISASDELNALTAERVWQEVDKSLGGPHPEVFFEVLHQCGALEVLFPEIFALFGVPQPEKWHPEIDTGVHTLMVLAQAALLTEDKSVRFAALVHDLGKALSPKEHLPKHHGHGQKGLPLIKALCTRLRVPNETRDLALLVSDQHQNVHQAFELRAETIVKIFDKADFWRKPERLTQLILACTADMRGRTGFENNPYPQGEYLTQCFLAANNVDIAAIIAAGFQGAEIKQALNLRRIEAVSQFKQKMQTKLPTDEQ</sequence>
<evidence type="ECO:0000255" key="1">
    <source>
        <dbReference type="HAMAP-Rule" id="MF_01261"/>
    </source>
</evidence>
<proteinExistence type="inferred from homology"/>
<feature type="chain" id="PRO_1000085815" description="Multifunctional CCA protein">
    <location>
        <begin position="1"/>
        <end position="416"/>
    </location>
</feature>
<feature type="domain" description="HD" evidence="1">
    <location>
        <begin position="228"/>
        <end position="329"/>
    </location>
</feature>
<feature type="binding site" evidence="1">
    <location>
        <position position="8"/>
    </location>
    <ligand>
        <name>ATP</name>
        <dbReference type="ChEBI" id="CHEBI:30616"/>
    </ligand>
</feature>
<feature type="binding site" evidence="1">
    <location>
        <position position="8"/>
    </location>
    <ligand>
        <name>CTP</name>
        <dbReference type="ChEBI" id="CHEBI:37563"/>
    </ligand>
</feature>
<feature type="binding site" evidence="1">
    <location>
        <position position="11"/>
    </location>
    <ligand>
        <name>ATP</name>
        <dbReference type="ChEBI" id="CHEBI:30616"/>
    </ligand>
</feature>
<feature type="binding site" evidence="1">
    <location>
        <position position="11"/>
    </location>
    <ligand>
        <name>CTP</name>
        <dbReference type="ChEBI" id="CHEBI:37563"/>
    </ligand>
</feature>
<feature type="binding site" evidence="1">
    <location>
        <position position="21"/>
    </location>
    <ligand>
        <name>Mg(2+)</name>
        <dbReference type="ChEBI" id="CHEBI:18420"/>
    </ligand>
</feature>
<feature type="binding site" evidence="1">
    <location>
        <position position="23"/>
    </location>
    <ligand>
        <name>Mg(2+)</name>
        <dbReference type="ChEBI" id="CHEBI:18420"/>
    </ligand>
</feature>
<feature type="binding site" evidence="1">
    <location>
        <position position="91"/>
    </location>
    <ligand>
        <name>ATP</name>
        <dbReference type="ChEBI" id="CHEBI:30616"/>
    </ligand>
</feature>
<feature type="binding site" evidence="1">
    <location>
        <position position="91"/>
    </location>
    <ligand>
        <name>CTP</name>
        <dbReference type="ChEBI" id="CHEBI:37563"/>
    </ligand>
</feature>
<feature type="binding site" evidence="1">
    <location>
        <position position="137"/>
    </location>
    <ligand>
        <name>ATP</name>
        <dbReference type="ChEBI" id="CHEBI:30616"/>
    </ligand>
</feature>
<feature type="binding site" evidence="1">
    <location>
        <position position="137"/>
    </location>
    <ligand>
        <name>CTP</name>
        <dbReference type="ChEBI" id="CHEBI:37563"/>
    </ligand>
</feature>
<feature type="binding site" evidence="1">
    <location>
        <position position="140"/>
    </location>
    <ligand>
        <name>ATP</name>
        <dbReference type="ChEBI" id="CHEBI:30616"/>
    </ligand>
</feature>
<feature type="binding site" evidence="1">
    <location>
        <position position="140"/>
    </location>
    <ligand>
        <name>CTP</name>
        <dbReference type="ChEBI" id="CHEBI:37563"/>
    </ligand>
</feature>